<proteinExistence type="evidence at protein level"/>
<feature type="initiator methionine" description="Removed" evidence="9">
    <location>
        <position position="1"/>
    </location>
</feature>
<feature type="chain" id="PRO_0000125460" description="Kinesin-like protein KIF20A">
    <location>
        <begin position="2"/>
        <end position="890"/>
    </location>
</feature>
<feature type="domain" description="Kinesin motor" evidence="3">
    <location>
        <begin position="64"/>
        <end position="507"/>
    </location>
</feature>
<feature type="region of interest" description="Globular" evidence="2">
    <location>
        <begin position="763"/>
        <end position="890"/>
    </location>
</feature>
<feature type="region of interest" description="Disordered" evidence="4">
    <location>
        <begin position="832"/>
        <end position="865"/>
    </location>
</feature>
<feature type="coiled-coil region" evidence="2">
    <location>
        <begin position="611"/>
        <end position="762"/>
    </location>
</feature>
<feature type="binding site" evidence="3">
    <location>
        <begin position="160"/>
        <end position="167"/>
    </location>
    <ligand>
        <name>ATP</name>
        <dbReference type="ChEBI" id="CHEBI:30616"/>
    </ligand>
</feature>
<feature type="modified residue" description="N-acetylserine" evidence="9">
    <location>
        <position position="2"/>
    </location>
</feature>
<feature type="modified residue" description="Phosphoserine" evidence="9">
    <location>
        <position position="7"/>
    </location>
</feature>
<feature type="modified residue" description="Phosphoserine" evidence="9">
    <location>
        <position position="14"/>
    </location>
</feature>
<feature type="modified residue" description="Phosphoserine" evidence="9">
    <location>
        <position position="21"/>
    </location>
</feature>
<feature type="modified residue" description="Phosphoserine; by PLK1" evidence="5 8">
    <location>
        <position position="528"/>
    </location>
</feature>
<feature type="modified residue" description="Phosphoserine" evidence="8 9 10 11">
    <location>
        <position position="532"/>
    </location>
</feature>
<feature type="modified residue" description="Phosphoserine" evidence="5">
    <location>
        <position position="662"/>
    </location>
</feature>
<feature type="modified residue" description="Phosphoserine" evidence="5">
    <location>
        <position position="668"/>
    </location>
</feature>
<feature type="modified residue" description="Phosphoserine" evidence="11">
    <location>
        <position position="685"/>
    </location>
</feature>
<feature type="modified residue" description="Phosphoserine" evidence="9">
    <location>
        <position position="825"/>
    </location>
</feature>
<feature type="modified residue" description="Phosphothreonine" evidence="8">
    <location>
        <position position="857"/>
    </location>
</feature>
<feature type="modified residue" description="Phosphoserine" evidence="8">
    <location>
        <position position="867"/>
    </location>
</feature>
<feature type="modified residue" description="Phosphoserine" evidence="11">
    <location>
        <position position="878"/>
    </location>
</feature>
<feature type="modified residue" description="Phosphoserine" evidence="11">
    <location>
        <position position="883"/>
    </location>
</feature>
<feature type="splice variant" id="VSP_056007" description="In isoform 2." evidence="7">
    <location>
        <begin position="65"/>
        <end position="82"/>
    </location>
</feature>
<feature type="sequence variant" id="VAR_049704" description="In dbSNP:rs3734116.">
    <original>E</original>
    <variation>K</variation>
    <location>
        <position position="63"/>
    </location>
</feature>
<feature type="sequence variant" id="VAR_086018" description="In RCM6; loss-of-function variant unable to rescue cardiac defects in zebrafish morphants; results in greatly reduced microtubule activated motor activity; does not localize to the spindle midzone; dbSNP:rs771130761." evidence="6">
    <original>R</original>
    <variation>W</variation>
    <location>
        <position position="182"/>
    </location>
</feature>
<feature type="sequence variant" id="VAR_049705" description="In dbSNP:rs3172747.">
    <original>P</original>
    <variation>L</variation>
    <location>
        <position position="839"/>
    </location>
</feature>
<feature type="mutagenesis site" description="Impairs phosphorylation by PLK1 and recruitment of PLK1 to the spindle." evidence="5">
    <original>S</original>
    <variation>A</variation>
    <location>
        <position position="528"/>
    </location>
</feature>
<feature type="helix" evidence="12">
    <location>
        <begin position="596"/>
        <end position="663"/>
    </location>
</feature>
<organism>
    <name type="scientific">Homo sapiens</name>
    <name type="common">Human</name>
    <dbReference type="NCBI Taxonomy" id="9606"/>
    <lineage>
        <taxon>Eukaryota</taxon>
        <taxon>Metazoa</taxon>
        <taxon>Chordata</taxon>
        <taxon>Craniata</taxon>
        <taxon>Vertebrata</taxon>
        <taxon>Euteleostomi</taxon>
        <taxon>Mammalia</taxon>
        <taxon>Eutheria</taxon>
        <taxon>Euarchontoglires</taxon>
        <taxon>Primates</taxon>
        <taxon>Haplorrhini</taxon>
        <taxon>Catarrhini</taxon>
        <taxon>Hominidae</taxon>
        <taxon>Homo</taxon>
    </lineage>
</organism>
<protein>
    <recommendedName>
        <fullName>Kinesin-like protein KIF20A</fullName>
    </recommendedName>
    <alternativeName>
        <fullName>GG10_2</fullName>
    </alternativeName>
    <alternativeName>
        <fullName>Mitotic kinesin-like protein 2</fullName>
        <shortName>MKlp2</shortName>
    </alternativeName>
    <alternativeName>
        <fullName>Rab6-interacting kinesin-like protein</fullName>
    </alternativeName>
    <alternativeName>
        <fullName>Rabkinesin-6</fullName>
    </alternativeName>
</protein>
<comment type="function">
    <text evidence="5">Mitotic kinesin required for chromosome passenger complex (CPC)-mediated cytokinesis. Following phosphorylation by PLK1, involved in recruitment of PLK1 to the central spindle. Interacts with guanosine triphosphate (GTP)-bound forms of RAB6A and RAB6B. May act as a motor required for the retrograde RAB6 regulated transport of Golgi membranes and associated vesicles along microtubules. Has a microtubule plus end-directed motility.</text>
</comment>
<comment type="interaction">
    <interactant intactId="EBI-2551319">
        <id>O95235</id>
    </interactant>
    <interactant intactId="EBI-745689">
        <id>Q7L5A3</id>
        <label>ATOSB</label>
    </interactant>
    <organismsDiffer>false</organismsDiffer>
    <experiments>4</experiments>
</comment>
<comment type="subcellular location">
    <subcellularLocation>
        <location evidence="1">Golgi apparatus</location>
    </subcellularLocation>
    <subcellularLocation>
        <location evidence="5 6">Cytoplasm</location>
        <location evidence="5 6">Cytoskeleton</location>
        <location evidence="5 6">Spindle</location>
    </subcellularLocation>
    <text evidence="6">Localizes to the spindle midzone during anaphase and telophase.</text>
</comment>
<comment type="alternative products">
    <event type="alternative splicing"/>
    <isoform>
        <id>O95235-1</id>
        <name>1</name>
        <sequence type="displayed"/>
    </isoform>
    <isoform>
        <id>O95235-2</id>
        <name>2</name>
        <sequence type="described" ref="VSP_056007"/>
    </isoform>
</comment>
<comment type="PTM">
    <text evidence="5">Phosphorylated by PLK1 at Ser-528 during mitosis, creating a docking site for PLK1 and recruiting PLK1 at central spindle.</text>
</comment>
<comment type="disease" evidence="6">
    <disease id="DI-06155">
        <name>Cardiomyopathy, familial restrictive 6</name>
        <acronym>RCM6</acronym>
        <description>A heart disorder characterized by impaired filling of the ventricles with reduced diastolic volume, in the presence of normal or near normal wall thickness and systolic function. RCM6 is an autosomal recessive, severe form characterized by prenatal onset, irreversible heart failure and early death.</description>
        <dbReference type="MIM" id="619433"/>
    </disease>
    <text>The disease is caused by variants affecting the gene represented in this entry.</text>
</comment>
<comment type="similarity">
    <text evidence="3">Belongs to the TRAFAC class myosin-kinesin ATPase superfamily. Kinesin family.</text>
</comment>
<evidence type="ECO:0000250" key="1"/>
<evidence type="ECO:0000255" key="2"/>
<evidence type="ECO:0000255" key="3">
    <source>
        <dbReference type="PROSITE-ProRule" id="PRU00283"/>
    </source>
</evidence>
<evidence type="ECO:0000256" key="4">
    <source>
        <dbReference type="SAM" id="MobiDB-lite"/>
    </source>
</evidence>
<evidence type="ECO:0000269" key="5">
    <source>
    </source>
</evidence>
<evidence type="ECO:0000269" key="6">
    <source>
    </source>
</evidence>
<evidence type="ECO:0000303" key="7">
    <source>
    </source>
</evidence>
<evidence type="ECO:0007744" key="8">
    <source>
    </source>
</evidence>
<evidence type="ECO:0007744" key="9">
    <source>
    </source>
</evidence>
<evidence type="ECO:0007744" key="10">
    <source>
    </source>
</evidence>
<evidence type="ECO:0007744" key="11">
    <source>
    </source>
</evidence>
<evidence type="ECO:0007829" key="12">
    <source>
        <dbReference type="PDB" id="6YIP"/>
    </source>
</evidence>
<dbReference type="EMBL" id="AF070672">
    <property type="protein sequence ID" value="AAC83230.1"/>
    <property type="molecule type" value="mRNA"/>
</dbReference>
<dbReference type="EMBL" id="AF153329">
    <property type="protein sequence ID" value="AAD37806.1"/>
    <property type="molecule type" value="mRNA"/>
</dbReference>
<dbReference type="EMBL" id="AK296879">
    <property type="protein sequence ID" value="BAG59441.1"/>
    <property type="molecule type" value="mRNA"/>
</dbReference>
<dbReference type="EMBL" id="AC106752">
    <property type="status" value="NOT_ANNOTATED_CDS"/>
    <property type="molecule type" value="Genomic_DNA"/>
</dbReference>
<dbReference type="EMBL" id="AC109442">
    <property type="status" value="NOT_ANNOTATED_CDS"/>
    <property type="molecule type" value="Genomic_DNA"/>
</dbReference>
<dbReference type="EMBL" id="CH471062">
    <property type="protein sequence ID" value="EAW62157.1"/>
    <property type="molecule type" value="Genomic_DNA"/>
</dbReference>
<dbReference type="EMBL" id="CH471062">
    <property type="protein sequence ID" value="EAW62158.1"/>
    <property type="molecule type" value="Genomic_DNA"/>
</dbReference>
<dbReference type="EMBL" id="BC012999">
    <property type="protein sequence ID" value="AAH12999.1"/>
    <property type="molecule type" value="mRNA"/>
</dbReference>
<dbReference type="CCDS" id="CCDS4199.1">
    <molecule id="O95235-1"/>
</dbReference>
<dbReference type="RefSeq" id="NP_005724.1">
    <molecule id="O95235-1"/>
    <property type="nucleotide sequence ID" value="NM_005733.3"/>
</dbReference>
<dbReference type="PDB" id="6YIP">
    <property type="method" value="X-ray"/>
    <property type="resolution" value="1.43 A"/>
    <property type="chains" value="A/B=596-668"/>
</dbReference>
<dbReference type="PDBsum" id="6YIP"/>
<dbReference type="SMR" id="O95235"/>
<dbReference type="BioGRID" id="115418">
    <property type="interactions" value="1062"/>
</dbReference>
<dbReference type="CORUM" id="O95235"/>
<dbReference type="FunCoup" id="O95235">
    <property type="interactions" value="1289"/>
</dbReference>
<dbReference type="IntAct" id="O95235">
    <property type="interactions" value="69"/>
</dbReference>
<dbReference type="MINT" id="O95235"/>
<dbReference type="STRING" id="9606.ENSP00000378356"/>
<dbReference type="BindingDB" id="O95235"/>
<dbReference type="ChEMBL" id="CHEMBL2021753"/>
<dbReference type="iPTMnet" id="O95235"/>
<dbReference type="PhosphoSitePlus" id="O95235"/>
<dbReference type="SwissPalm" id="O95235"/>
<dbReference type="BioMuta" id="KIF20A"/>
<dbReference type="jPOST" id="O95235"/>
<dbReference type="MassIVE" id="O95235"/>
<dbReference type="PaxDb" id="9606-ENSP00000378356"/>
<dbReference type="PeptideAtlas" id="O95235"/>
<dbReference type="ProteomicsDB" id="4513"/>
<dbReference type="ProteomicsDB" id="50732">
    <molecule id="O95235-1"/>
</dbReference>
<dbReference type="Pumba" id="O95235"/>
<dbReference type="Antibodypedia" id="26611">
    <property type="antibodies" value="314 antibodies from 28 providers"/>
</dbReference>
<dbReference type="DNASU" id="10112"/>
<dbReference type="Ensembl" id="ENST00000394894.8">
    <molecule id="O95235-1"/>
    <property type="protein sequence ID" value="ENSP00000378356.3"/>
    <property type="gene ID" value="ENSG00000112984.12"/>
</dbReference>
<dbReference type="Ensembl" id="ENST00000508792.5">
    <molecule id="O95235-2"/>
    <property type="protein sequence ID" value="ENSP00000420880.1"/>
    <property type="gene ID" value="ENSG00000112984.12"/>
</dbReference>
<dbReference type="GeneID" id="10112"/>
<dbReference type="KEGG" id="hsa:10112"/>
<dbReference type="MANE-Select" id="ENST00000394894.8">
    <property type="protein sequence ID" value="ENSP00000378356.3"/>
    <property type="RefSeq nucleotide sequence ID" value="NM_005733.3"/>
    <property type="RefSeq protein sequence ID" value="NP_005724.1"/>
</dbReference>
<dbReference type="UCSC" id="uc003lcj.4">
    <molecule id="O95235-1"/>
    <property type="organism name" value="human"/>
</dbReference>
<dbReference type="AGR" id="HGNC:9787"/>
<dbReference type="CTD" id="10112"/>
<dbReference type="DisGeNET" id="10112"/>
<dbReference type="GeneCards" id="KIF20A"/>
<dbReference type="HGNC" id="HGNC:9787">
    <property type="gene designation" value="KIF20A"/>
</dbReference>
<dbReference type="HPA" id="ENSG00000112984">
    <property type="expression patterns" value="Tissue enhanced (bone marrow, lymphoid tissue, testis)"/>
</dbReference>
<dbReference type="MalaCards" id="KIF20A"/>
<dbReference type="MIM" id="605664">
    <property type="type" value="gene"/>
</dbReference>
<dbReference type="MIM" id="619433">
    <property type="type" value="phenotype"/>
</dbReference>
<dbReference type="neXtProt" id="NX_O95235"/>
<dbReference type="OpenTargets" id="ENSG00000112984"/>
<dbReference type="Orphanet" id="75249">
    <property type="disease" value="Familial isolated restrictive cardiomyopathy"/>
</dbReference>
<dbReference type="PharmGKB" id="PA34149"/>
<dbReference type="VEuPathDB" id="HostDB:ENSG00000112984"/>
<dbReference type="eggNOG" id="KOG0247">
    <property type="taxonomic scope" value="Eukaryota"/>
</dbReference>
<dbReference type="GeneTree" id="ENSGT00940000156931"/>
<dbReference type="HOGENOM" id="CLU_001485_2_5_1"/>
<dbReference type="InParanoid" id="O95235"/>
<dbReference type="OMA" id="NRHPQKA"/>
<dbReference type="OrthoDB" id="2403182at2759"/>
<dbReference type="PAN-GO" id="O95235">
    <property type="GO annotations" value="7 GO annotations based on evolutionary models"/>
</dbReference>
<dbReference type="PhylomeDB" id="O95235"/>
<dbReference type="TreeFam" id="TF105232"/>
<dbReference type="BRENDA" id="5.6.1.3">
    <property type="organism ID" value="2681"/>
</dbReference>
<dbReference type="PathwayCommons" id="O95235"/>
<dbReference type="Reactome" id="R-HSA-2132295">
    <property type="pathway name" value="MHC class II antigen presentation"/>
</dbReference>
<dbReference type="Reactome" id="R-HSA-6811434">
    <property type="pathway name" value="COPI-dependent Golgi-to-ER retrograde traffic"/>
</dbReference>
<dbReference type="Reactome" id="R-HSA-68884">
    <property type="pathway name" value="Mitotic Telophase/Cytokinesis"/>
</dbReference>
<dbReference type="Reactome" id="R-HSA-983189">
    <property type="pathway name" value="Kinesins"/>
</dbReference>
<dbReference type="SignaLink" id="O95235"/>
<dbReference type="SIGNOR" id="O95235"/>
<dbReference type="BioGRID-ORCS" id="10112">
    <property type="hits" value="303 hits in 1170 CRISPR screens"/>
</dbReference>
<dbReference type="ChiTaRS" id="KIF20A">
    <property type="organism name" value="human"/>
</dbReference>
<dbReference type="GeneWiki" id="KIF20A"/>
<dbReference type="GenomeRNAi" id="10112"/>
<dbReference type="Pharos" id="O95235">
    <property type="development level" value="Tchem"/>
</dbReference>
<dbReference type="PRO" id="PR:O95235"/>
<dbReference type="Proteomes" id="UP000005640">
    <property type="component" value="Chromosome 5"/>
</dbReference>
<dbReference type="RNAct" id="O95235">
    <property type="molecule type" value="protein"/>
</dbReference>
<dbReference type="Bgee" id="ENSG00000112984">
    <property type="expression patterns" value="Expressed in ventricular zone and 125 other cell types or tissues"/>
</dbReference>
<dbReference type="ExpressionAtlas" id="O95235">
    <property type="expression patterns" value="baseline and differential"/>
</dbReference>
<dbReference type="GO" id="GO:0032154">
    <property type="term" value="C:cleavage furrow"/>
    <property type="evidence" value="ECO:0000314"/>
    <property type="project" value="HPA"/>
</dbReference>
<dbReference type="GO" id="GO:0005737">
    <property type="term" value="C:cytoplasm"/>
    <property type="evidence" value="ECO:0000318"/>
    <property type="project" value="GO_Central"/>
</dbReference>
<dbReference type="GO" id="GO:0005794">
    <property type="term" value="C:Golgi apparatus"/>
    <property type="evidence" value="ECO:0007669"/>
    <property type="project" value="UniProtKB-SubCell"/>
</dbReference>
<dbReference type="GO" id="GO:0045171">
    <property type="term" value="C:intercellular bridge"/>
    <property type="evidence" value="ECO:0000314"/>
    <property type="project" value="HPA"/>
</dbReference>
<dbReference type="GO" id="GO:0005871">
    <property type="term" value="C:kinesin complex"/>
    <property type="evidence" value="ECO:0000318"/>
    <property type="project" value="GO_Central"/>
</dbReference>
<dbReference type="GO" id="GO:0005874">
    <property type="term" value="C:microtubule"/>
    <property type="evidence" value="ECO:0000318"/>
    <property type="project" value="GO_Central"/>
</dbReference>
<dbReference type="GO" id="GO:0030496">
    <property type="term" value="C:midbody"/>
    <property type="evidence" value="ECO:0000314"/>
    <property type="project" value="UniProtKB"/>
</dbReference>
<dbReference type="GO" id="GO:0072686">
    <property type="term" value="C:mitotic spindle"/>
    <property type="evidence" value="ECO:0000314"/>
    <property type="project" value="HPA"/>
</dbReference>
<dbReference type="GO" id="GO:0005654">
    <property type="term" value="C:nucleoplasm"/>
    <property type="evidence" value="ECO:0000314"/>
    <property type="project" value="HPA"/>
</dbReference>
<dbReference type="GO" id="GO:0005634">
    <property type="term" value="C:nucleus"/>
    <property type="evidence" value="ECO:0000318"/>
    <property type="project" value="GO_Central"/>
</dbReference>
<dbReference type="GO" id="GO:0005819">
    <property type="term" value="C:spindle"/>
    <property type="evidence" value="ECO:0000314"/>
    <property type="project" value="UniProtKB"/>
</dbReference>
<dbReference type="GO" id="GO:0005524">
    <property type="term" value="F:ATP binding"/>
    <property type="evidence" value="ECO:0007669"/>
    <property type="project" value="UniProtKB-KW"/>
</dbReference>
<dbReference type="GO" id="GO:0016887">
    <property type="term" value="F:ATP hydrolysis activity"/>
    <property type="evidence" value="ECO:0000318"/>
    <property type="project" value="GO_Central"/>
</dbReference>
<dbReference type="GO" id="GO:0008017">
    <property type="term" value="F:microtubule binding"/>
    <property type="evidence" value="ECO:0000318"/>
    <property type="project" value="GO_Central"/>
</dbReference>
<dbReference type="GO" id="GO:0003777">
    <property type="term" value="F:microtubule motor activity"/>
    <property type="evidence" value="ECO:0000318"/>
    <property type="project" value="GO_Central"/>
</dbReference>
<dbReference type="GO" id="GO:0019901">
    <property type="term" value="F:protein kinase binding"/>
    <property type="evidence" value="ECO:0000353"/>
    <property type="project" value="UniProtKB"/>
</dbReference>
<dbReference type="GO" id="GO:0001578">
    <property type="term" value="P:microtubule bundle formation"/>
    <property type="evidence" value="ECO:0000314"/>
    <property type="project" value="UniProtKB"/>
</dbReference>
<dbReference type="GO" id="GO:0007018">
    <property type="term" value="P:microtubule-based movement"/>
    <property type="evidence" value="ECO:0000318"/>
    <property type="project" value="GO_Central"/>
</dbReference>
<dbReference type="GO" id="GO:0061952">
    <property type="term" value="P:midbody abscission"/>
    <property type="evidence" value="ECO:0000315"/>
    <property type="project" value="UniProtKB"/>
</dbReference>
<dbReference type="GO" id="GO:0000281">
    <property type="term" value="P:mitotic cytokinesis"/>
    <property type="evidence" value="ECO:0000315"/>
    <property type="project" value="UniProtKB"/>
</dbReference>
<dbReference type="GO" id="GO:0015031">
    <property type="term" value="P:protein transport"/>
    <property type="evidence" value="ECO:0007669"/>
    <property type="project" value="UniProtKB-KW"/>
</dbReference>
<dbReference type="GO" id="GO:0032465">
    <property type="term" value="P:regulation of cytokinesis"/>
    <property type="evidence" value="ECO:0000314"/>
    <property type="project" value="UniProtKB"/>
</dbReference>
<dbReference type="CDD" id="cd01368">
    <property type="entry name" value="KISc_KIF23_like"/>
    <property type="match status" value="1"/>
</dbReference>
<dbReference type="CDD" id="cd21787">
    <property type="entry name" value="RBD_KIF20A"/>
    <property type="match status" value="1"/>
</dbReference>
<dbReference type="FunFam" id="3.40.850.10:FF:000094">
    <property type="entry name" value="Kinesin-like protein"/>
    <property type="match status" value="1"/>
</dbReference>
<dbReference type="FunFam" id="3.40.850.10:FF:000095">
    <property type="entry name" value="Kinesin-like protein"/>
    <property type="match status" value="1"/>
</dbReference>
<dbReference type="Gene3D" id="3.40.850.10">
    <property type="entry name" value="Kinesin motor domain"/>
    <property type="match status" value="1"/>
</dbReference>
<dbReference type="InterPro" id="IPR047149">
    <property type="entry name" value="KIF11-like"/>
</dbReference>
<dbReference type="InterPro" id="IPR019821">
    <property type="entry name" value="Kinesin_motor_CS"/>
</dbReference>
<dbReference type="InterPro" id="IPR001752">
    <property type="entry name" value="Kinesin_motor_dom"/>
</dbReference>
<dbReference type="InterPro" id="IPR036961">
    <property type="entry name" value="Kinesin_motor_dom_sf"/>
</dbReference>
<dbReference type="InterPro" id="IPR027417">
    <property type="entry name" value="P-loop_NTPase"/>
</dbReference>
<dbReference type="PANTHER" id="PTHR47970:SF29">
    <property type="entry name" value="KINESIN FAMILY MEMBER 20B"/>
    <property type="match status" value="1"/>
</dbReference>
<dbReference type="PANTHER" id="PTHR47970">
    <property type="entry name" value="KINESIN-LIKE PROTEIN KIF11"/>
    <property type="match status" value="1"/>
</dbReference>
<dbReference type="Pfam" id="PF00225">
    <property type="entry name" value="Kinesin"/>
    <property type="match status" value="1"/>
</dbReference>
<dbReference type="PRINTS" id="PR00380">
    <property type="entry name" value="KINESINHEAVY"/>
</dbReference>
<dbReference type="SMART" id="SM00129">
    <property type="entry name" value="KISc"/>
    <property type="match status" value="1"/>
</dbReference>
<dbReference type="SUPFAM" id="SSF52540">
    <property type="entry name" value="P-loop containing nucleoside triphosphate hydrolases"/>
    <property type="match status" value="1"/>
</dbReference>
<dbReference type="PROSITE" id="PS00411">
    <property type="entry name" value="KINESIN_MOTOR_1"/>
    <property type="match status" value="1"/>
</dbReference>
<dbReference type="PROSITE" id="PS50067">
    <property type="entry name" value="KINESIN_MOTOR_2"/>
    <property type="match status" value="1"/>
</dbReference>
<keyword id="KW-0002">3D-structure</keyword>
<keyword id="KW-0007">Acetylation</keyword>
<keyword id="KW-0025">Alternative splicing</keyword>
<keyword id="KW-0067">ATP-binding</keyword>
<keyword id="KW-0122">Cardiomyopathy</keyword>
<keyword id="KW-0175">Coiled coil</keyword>
<keyword id="KW-0963">Cytoplasm</keyword>
<keyword id="KW-0206">Cytoskeleton</keyword>
<keyword id="KW-0225">Disease variant</keyword>
<keyword id="KW-0333">Golgi apparatus</keyword>
<keyword id="KW-0493">Microtubule</keyword>
<keyword id="KW-0505">Motor protein</keyword>
<keyword id="KW-0547">Nucleotide-binding</keyword>
<keyword id="KW-0597">Phosphoprotein</keyword>
<keyword id="KW-0653">Protein transport</keyword>
<keyword id="KW-1267">Proteomics identification</keyword>
<keyword id="KW-1185">Reference proteome</keyword>
<keyword id="KW-0813">Transport</keyword>
<accession>O95235</accession>
<accession>B4DL79</accession>
<accession>D3DQB6</accession>
<reference key="1">
    <citation type="journal article" date="1999" name="Blood">
        <title>Vascular endothelial genes that are responsive to tumor necrosis factor-alpha in vitro are expressed in atherosclerotic lesions, including inhibitor of apoptosis protein-1, stannin, and two novel genes.</title>
        <authorList>
            <person name="Horrevoets A.J.G."/>
            <person name="Fontijn R.D."/>
            <person name="van Zonneveld A.J."/>
            <person name="de Vries C.J.M."/>
            <person name="ten Cate J.W."/>
            <person name="Pannekoek H."/>
        </authorList>
    </citation>
    <scope>NUCLEOTIDE SEQUENCE [MRNA] (ISOFORM 1)</scope>
    <source>
        <tissue>Endothelial cell</tissue>
    </source>
</reference>
<reference key="2">
    <citation type="journal article" date="2000" name="Gene">
        <title>cDNA cloning, expression pattern, genomic structure and chromosomal location of RAB6KIFL, a human kinesin-like gene.</title>
        <authorList>
            <person name="Lai F."/>
            <person name="Fernald A.A."/>
            <person name="Zhao N."/>
            <person name="Le Beau M.M."/>
        </authorList>
    </citation>
    <scope>NUCLEOTIDE SEQUENCE [MRNA] (ISOFORM 1)</scope>
    <source>
        <tissue>Brain</tissue>
    </source>
</reference>
<reference key="3">
    <citation type="journal article" date="2004" name="Nat. Genet.">
        <title>Complete sequencing and characterization of 21,243 full-length human cDNAs.</title>
        <authorList>
            <person name="Ota T."/>
            <person name="Suzuki Y."/>
            <person name="Nishikawa T."/>
            <person name="Otsuki T."/>
            <person name="Sugiyama T."/>
            <person name="Irie R."/>
            <person name="Wakamatsu A."/>
            <person name="Hayashi K."/>
            <person name="Sato H."/>
            <person name="Nagai K."/>
            <person name="Kimura K."/>
            <person name="Makita H."/>
            <person name="Sekine M."/>
            <person name="Obayashi M."/>
            <person name="Nishi T."/>
            <person name="Shibahara T."/>
            <person name="Tanaka T."/>
            <person name="Ishii S."/>
            <person name="Yamamoto J."/>
            <person name="Saito K."/>
            <person name="Kawai Y."/>
            <person name="Isono Y."/>
            <person name="Nakamura Y."/>
            <person name="Nagahari K."/>
            <person name="Murakami K."/>
            <person name="Yasuda T."/>
            <person name="Iwayanagi T."/>
            <person name="Wagatsuma M."/>
            <person name="Shiratori A."/>
            <person name="Sudo H."/>
            <person name="Hosoiri T."/>
            <person name="Kaku Y."/>
            <person name="Kodaira H."/>
            <person name="Kondo H."/>
            <person name="Sugawara M."/>
            <person name="Takahashi M."/>
            <person name="Kanda K."/>
            <person name="Yokoi T."/>
            <person name="Furuya T."/>
            <person name="Kikkawa E."/>
            <person name="Omura Y."/>
            <person name="Abe K."/>
            <person name="Kamihara K."/>
            <person name="Katsuta N."/>
            <person name="Sato K."/>
            <person name="Tanikawa M."/>
            <person name="Yamazaki M."/>
            <person name="Ninomiya K."/>
            <person name="Ishibashi T."/>
            <person name="Yamashita H."/>
            <person name="Murakawa K."/>
            <person name="Fujimori K."/>
            <person name="Tanai H."/>
            <person name="Kimata M."/>
            <person name="Watanabe M."/>
            <person name="Hiraoka S."/>
            <person name="Chiba Y."/>
            <person name="Ishida S."/>
            <person name="Ono Y."/>
            <person name="Takiguchi S."/>
            <person name="Watanabe S."/>
            <person name="Yosida M."/>
            <person name="Hotuta T."/>
            <person name="Kusano J."/>
            <person name="Kanehori K."/>
            <person name="Takahashi-Fujii A."/>
            <person name="Hara H."/>
            <person name="Tanase T.-O."/>
            <person name="Nomura Y."/>
            <person name="Togiya S."/>
            <person name="Komai F."/>
            <person name="Hara R."/>
            <person name="Takeuchi K."/>
            <person name="Arita M."/>
            <person name="Imose N."/>
            <person name="Musashino K."/>
            <person name="Yuuki H."/>
            <person name="Oshima A."/>
            <person name="Sasaki N."/>
            <person name="Aotsuka S."/>
            <person name="Yoshikawa Y."/>
            <person name="Matsunawa H."/>
            <person name="Ichihara T."/>
            <person name="Shiohata N."/>
            <person name="Sano S."/>
            <person name="Moriya S."/>
            <person name="Momiyama H."/>
            <person name="Satoh N."/>
            <person name="Takami S."/>
            <person name="Terashima Y."/>
            <person name="Suzuki O."/>
            <person name="Nakagawa S."/>
            <person name="Senoh A."/>
            <person name="Mizoguchi H."/>
            <person name="Goto Y."/>
            <person name="Shimizu F."/>
            <person name="Wakebe H."/>
            <person name="Hishigaki H."/>
            <person name="Watanabe T."/>
            <person name="Sugiyama A."/>
            <person name="Takemoto M."/>
            <person name="Kawakami B."/>
            <person name="Yamazaki M."/>
            <person name="Watanabe K."/>
            <person name="Kumagai A."/>
            <person name="Itakura S."/>
            <person name="Fukuzumi Y."/>
            <person name="Fujimori Y."/>
            <person name="Komiyama M."/>
            <person name="Tashiro H."/>
            <person name="Tanigami A."/>
            <person name="Fujiwara T."/>
            <person name="Ono T."/>
            <person name="Yamada K."/>
            <person name="Fujii Y."/>
            <person name="Ozaki K."/>
            <person name="Hirao M."/>
            <person name="Ohmori Y."/>
            <person name="Kawabata A."/>
            <person name="Hikiji T."/>
            <person name="Kobatake N."/>
            <person name="Inagaki H."/>
            <person name="Ikema Y."/>
            <person name="Okamoto S."/>
            <person name="Okitani R."/>
            <person name="Kawakami T."/>
            <person name="Noguchi S."/>
            <person name="Itoh T."/>
            <person name="Shigeta K."/>
            <person name="Senba T."/>
            <person name="Matsumura K."/>
            <person name="Nakajima Y."/>
            <person name="Mizuno T."/>
            <person name="Morinaga M."/>
            <person name="Sasaki M."/>
            <person name="Togashi T."/>
            <person name="Oyama M."/>
            <person name="Hata H."/>
            <person name="Watanabe M."/>
            <person name="Komatsu T."/>
            <person name="Mizushima-Sugano J."/>
            <person name="Satoh T."/>
            <person name="Shirai Y."/>
            <person name="Takahashi Y."/>
            <person name="Nakagawa K."/>
            <person name="Okumura K."/>
            <person name="Nagase T."/>
            <person name="Nomura N."/>
            <person name="Kikuchi H."/>
            <person name="Masuho Y."/>
            <person name="Yamashita R."/>
            <person name="Nakai K."/>
            <person name="Yada T."/>
            <person name="Nakamura Y."/>
            <person name="Ohara O."/>
            <person name="Isogai T."/>
            <person name="Sugano S."/>
        </authorList>
    </citation>
    <scope>NUCLEOTIDE SEQUENCE [LARGE SCALE MRNA] (ISOFORM 2)</scope>
    <source>
        <tissue>Tongue</tissue>
    </source>
</reference>
<reference key="4">
    <citation type="journal article" date="2004" name="Nature">
        <title>The DNA sequence and comparative analysis of human chromosome 5.</title>
        <authorList>
            <person name="Schmutz J."/>
            <person name="Martin J."/>
            <person name="Terry A."/>
            <person name="Couronne O."/>
            <person name="Grimwood J."/>
            <person name="Lowry S."/>
            <person name="Gordon L.A."/>
            <person name="Scott D."/>
            <person name="Xie G."/>
            <person name="Huang W."/>
            <person name="Hellsten U."/>
            <person name="Tran-Gyamfi M."/>
            <person name="She X."/>
            <person name="Prabhakar S."/>
            <person name="Aerts A."/>
            <person name="Altherr M."/>
            <person name="Bajorek E."/>
            <person name="Black S."/>
            <person name="Branscomb E."/>
            <person name="Caoile C."/>
            <person name="Challacombe J.F."/>
            <person name="Chan Y.M."/>
            <person name="Denys M."/>
            <person name="Detter J.C."/>
            <person name="Escobar J."/>
            <person name="Flowers D."/>
            <person name="Fotopulos D."/>
            <person name="Glavina T."/>
            <person name="Gomez M."/>
            <person name="Gonzales E."/>
            <person name="Goodstein D."/>
            <person name="Grigoriev I."/>
            <person name="Groza M."/>
            <person name="Hammon N."/>
            <person name="Hawkins T."/>
            <person name="Haydu L."/>
            <person name="Israni S."/>
            <person name="Jett J."/>
            <person name="Kadner K."/>
            <person name="Kimball H."/>
            <person name="Kobayashi A."/>
            <person name="Lopez F."/>
            <person name="Lou Y."/>
            <person name="Martinez D."/>
            <person name="Medina C."/>
            <person name="Morgan J."/>
            <person name="Nandkeshwar R."/>
            <person name="Noonan J.P."/>
            <person name="Pitluck S."/>
            <person name="Pollard M."/>
            <person name="Predki P."/>
            <person name="Priest J."/>
            <person name="Ramirez L."/>
            <person name="Retterer J."/>
            <person name="Rodriguez A."/>
            <person name="Rogers S."/>
            <person name="Salamov A."/>
            <person name="Salazar A."/>
            <person name="Thayer N."/>
            <person name="Tice H."/>
            <person name="Tsai M."/>
            <person name="Ustaszewska A."/>
            <person name="Vo N."/>
            <person name="Wheeler J."/>
            <person name="Wu K."/>
            <person name="Yang J."/>
            <person name="Dickson M."/>
            <person name="Cheng J.-F."/>
            <person name="Eichler E.E."/>
            <person name="Olsen A."/>
            <person name="Pennacchio L.A."/>
            <person name="Rokhsar D.S."/>
            <person name="Richardson P."/>
            <person name="Lucas S.M."/>
            <person name="Myers R.M."/>
            <person name="Rubin E.M."/>
        </authorList>
    </citation>
    <scope>NUCLEOTIDE SEQUENCE [LARGE SCALE GENOMIC DNA]</scope>
</reference>
<reference key="5">
    <citation type="submission" date="2005-09" db="EMBL/GenBank/DDBJ databases">
        <authorList>
            <person name="Mural R.J."/>
            <person name="Istrail S."/>
            <person name="Sutton G.G."/>
            <person name="Florea L."/>
            <person name="Halpern A.L."/>
            <person name="Mobarry C.M."/>
            <person name="Lippert R."/>
            <person name="Walenz B."/>
            <person name="Shatkay H."/>
            <person name="Dew I."/>
            <person name="Miller J.R."/>
            <person name="Flanigan M.J."/>
            <person name="Edwards N.J."/>
            <person name="Bolanos R."/>
            <person name="Fasulo D."/>
            <person name="Halldorsson B.V."/>
            <person name="Hannenhalli S."/>
            <person name="Turner R."/>
            <person name="Yooseph S."/>
            <person name="Lu F."/>
            <person name="Nusskern D.R."/>
            <person name="Shue B.C."/>
            <person name="Zheng X.H."/>
            <person name="Zhong F."/>
            <person name="Delcher A.L."/>
            <person name="Huson D.H."/>
            <person name="Kravitz S.A."/>
            <person name="Mouchard L."/>
            <person name="Reinert K."/>
            <person name="Remington K.A."/>
            <person name="Clark A.G."/>
            <person name="Waterman M.S."/>
            <person name="Eichler E.E."/>
            <person name="Adams M.D."/>
            <person name="Hunkapiller M.W."/>
            <person name="Myers E.W."/>
            <person name="Venter J.C."/>
        </authorList>
    </citation>
    <scope>NUCLEOTIDE SEQUENCE [LARGE SCALE GENOMIC DNA]</scope>
</reference>
<reference key="6">
    <citation type="journal article" date="2004" name="Genome Res.">
        <title>The status, quality, and expansion of the NIH full-length cDNA project: the Mammalian Gene Collection (MGC).</title>
        <authorList>
            <consortium name="The MGC Project Team"/>
        </authorList>
    </citation>
    <scope>NUCLEOTIDE SEQUENCE [LARGE SCALE MRNA] (ISOFORM 1)</scope>
    <source>
        <tissue>Uterus</tissue>
    </source>
</reference>
<reference key="7">
    <citation type="journal article" date="2003" name="J. Cell Biol.">
        <title>Phosphorylation of mitotic kinesin-like protein 2 by polo-like kinase 1 is required for cytokinesis.</title>
        <authorList>
            <person name="Neef R."/>
            <person name="Preisinger C."/>
            <person name="Sutcliffe J."/>
            <person name="Kopajtich R."/>
            <person name="Nigg E.A."/>
            <person name="Mayer T.U."/>
            <person name="Barr F.A."/>
        </authorList>
    </citation>
    <scope>SUBCELLULAR LOCATION</scope>
    <scope>INTERACTION WITH PLK1</scope>
    <scope>PHOSPHORYLATION AT SER-528; SER-662 AND SER-668</scope>
    <scope>MUTAGENESIS OF SER-528</scope>
    <scope>FUNCTION</scope>
</reference>
<reference key="8">
    <citation type="journal article" date="2006" name="Cell">
        <title>Global, in vivo, and site-specific phosphorylation dynamics in signaling networks.</title>
        <authorList>
            <person name="Olsen J.V."/>
            <person name="Blagoev B."/>
            <person name="Gnad F."/>
            <person name="Macek B."/>
            <person name="Kumar C."/>
            <person name="Mortensen P."/>
            <person name="Mann M."/>
        </authorList>
    </citation>
    <scope>IDENTIFICATION BY MASS SPECTROMETRY [LARGE SCALE ANALYSIS]</scope>
    <source>
        <tissue>Cervix carcinoma</tissue>
    </source>
</reference>
<reference key="9">
    <citation type="journal article" date="2006" name="Nat. Biotechnol.">
        <title>A probability-based approach for high-throughput protein phosphorylation analysis and site localization.</title>
        <authorList>
            <person name="Beausoleil S.A."/>
            <person name="Villen J."/>
            <person name="Gerber S.A."/>
            <person name="Rush J."/>
            <person name="Gygi S.P."/>
        </authorList>
    </citation>
    <scope>IDENTIFICATION BY MASS SPECTROMETRY [LARGE SCALE ANALYSIS]</scope>
    <source>
        <tissue>Cervix carcinoma</tissue>
    </source>
</reference>
<reference key="10">
    <citation type="journal article" date="2008" name="J. Proteome Res.">
        <title>Combining protein-based IMAC, peptide-based IMAC, and MudPIT for efficient phosphoproteomic analysis.</title>
        <authorList>
            <person name="Cantin G.T."/>
            <person name="Yi W."/>
            <person name="Lu B."/>
            <person name="Park S.K."/>
            <person name="Xu T."/>
            <person name="Lee J.-D."/>
            <person name="Yates J.R. III"/>
        </authorList>
    </citation>
    <scope>IDENTIFICATION BY MASS SPECTROMETRY [LARGE SCALE ANALYSIS]</scope>
    <source>
        <tissue>Cervix carcinoma</tissue>
    </source>
</reference>
<reference key="11">
    <citation type="journal article" date="2008" name="Mol. Cell">
        <title>Kinase-selective enrichment enables quantitative phosphoproteomics of the kinome across the cell cycle.</title>
        <authorList>
            <person name="Daub H."/>
            <person name="Olsen J.V."/>
            <person name="Bairlein M."/>
            <person name="Gnad F."/>
            <person name="Oppermann F.S."/>
            <person name="Korner R."/>
            <person name="Greff Z."/>
            <person name="Keri G."/>
            <person name="Stemmann O."/>
            <person name="Mann M."/>
        </authorList>
    </citation>
    <scope>IDENTIFICATION BY MASS SPECTROMETRY [LARGE SCALE ANALYSIS]</scope>
    <source>
        <tissue>Cervix carcinoma</tissue>
    </source>
</reference>
<reference key="12">
    <citation type="journal article" date="2008" name="Proc. Natl. Acad. Sci. U.S.A.">
        <title>A quantitative atlas of mitotic phosphorylation.</title>
        <authorList>
            <person name="Dephoure N."/>
            <person name="Zhou C."/>
            <person name="Villen J."/>
            <person name="Beausoleil S.A."/>
            <person name="Bakalarski C.E."/>
            <person name="Elledge S.J."/>
            <person name="Gygi S.P."/>
        </authorList>
    </citation>
    <scope>PHOSPHORYLATION [LARGE SCALE ANALYSIS] AT SER-528; SER-532; THR-857 AND SER-867</scope>
    <scope>IDENTIFICATION BY MASS SPECTROMETRY [LARGE SCALE ANALYSIS]</scope>
    <source>
        <tissue>Cervix carcinoma</tissue>
    </source>
</reference>
<reference key="13">
    <citation type="journal article" date="2010" name="Sci. Signal.">
        <title>Quantitative phosphoproteomics reveals widespread full phosphorylation site occupancy during mitosis.</title>
        <authorList>
            <person name="Olsen J.V."/>
            <person name="Vermeulen M."/>
            <person name="Santamaria A."/>
            <person name="Kumar C."/>
            <person name="Miller M.L."/>
            <person name="Jensen L.J."/>
            <person name="Gnad F."/>
            <person name="Cox J."/>
            <person name="Jensen T.S."/>
            <person name="Nigg E.A."/>
            <person name="Brunak S."/>
            <person name="Mann M."/>
        </authorList>
    </citation>
    <scope>ACETYLATION [LARGE SCALE ANALYSIS] AT SER-2</scope>
    <scope>PHOSPHORYLATION [LARGE SCALE ANALYSIS] AT SER-7; SER-14; SER-21; SER-532 AND SER-825</scope>
    <scope>CLEAVAGE OF INITIATOR METHIONINE [LARGE SCALE ANALYSIS]</scope>
    <scope>IDENTIFICATION BY MASS SPECTROMETRY [LARGE SCALE ANALYSIS]</scope>
    <source>
        <tissue>Cervix carcinoma</tissue>
    </source>
</reference>
<reference key="14">
    <citation type="journal article" date="2011" name="Sci. Signal.">
        <title>System-wide temporal characterization of the proteome and phosphoproteome of human embryonic stem cell differentiation.</title>
        <authorList>
            <person name="Rigbolt K.T."/>
            <person name="Prokhorova T.A."/>
            <person name="Akimov V."/>
            <person name="Henningsen J."/>
            <person name="Johansen P.T."/>
            <person name="Kratchmarova I."/>
            <person name="Kassem M."/>
            <person name="Mann M."/>
            <person name="Olsen J.V."/>
            <person name="Blagoev B."/>
        </authorList>
    </citation>
    <scope>PHOSPHORYLATION [LARGE SCALE ANALYSIS] AT SER-532</scope>
    <scope>IDENTIFICATION BY MASS SPECTROMETRY [LARGE SCALE ANALYSIS]</scope>
</reference>
<reference key="15">
    <citation type="journal article" date="2013" name="J. Proteome Res.">
        <title>Toward a comprehensive characterization of a human cancer cell phosphoproteome.</title>
        <authorList>
            <person name="Zhou H."/>
            <person name="Di Palma S."/>
            <person name="Preisinger C."/>
            <person name="Peng M."/>
            <person name="Polat A.N."/>
            <person name="Heck A.J."/>
            <person name="Mohammed S."/>
        </authorList>
    </citation>
    <scope>PHOSPHORYLATION [LARGE SCALE ANALYSIS] AT SER-532; SER-685; SER-878 AND SER-883</scope>
    <scope>IDENTIFICATION BY MASS SPECTROMETRY [LARGE SCALE ANALYSIS]</scope>
    <source>
        <tissue>Cervix carcinoma</tissue>
        <tissue>Erythroleukemia</tissue>
    </source>
</reference>
<reference key="16">
    <citation type="journal article" date="2018" name="PLoS Genet.">
        <title>Compound heterozygous loss-of-function mutations in KIF20A are associated with a novel lethal congenital cardiomyopathy in two siblings.</title>
        <authorList>
            <person name="Louw J.J."/>
            <person name="Nunes Bastos R."/>
            <person name="Chen X."/>
            <person name="Verdood C."/>
            <person name="Corveleyn A."/>
            <person name="Jia Y."/>
            <person name="Breckpot J."/>
            <person name="Gewillig M."/>
            <person name="Peeters H."/>
            <person name="Santoro M.M."/>
            <person name="Barr F."/>
            <person name="Devriendt K."/>
        </authorList>
    </citation>
    <scope>VARIANT RCM6 TRP-182</scope>
    <scope>INVOLVEMENT IN RCM6</scope>
    <scope>CHARACTERIZATION OF VARIANT RCM6 TRP-182</scope>
    <scope>SUBCELLULAR LOCATION</scope>
</reference>
<gene>
    <name type="primary">KIF20A</name>
    <name type="synonym">MKLP2</name>
    <name type="synonym">RAB6KIFL</name>
</gene>
<name>KI20A_HUMAN</name>
<sequence length="890" mass="100278">MSQGILSPPAGLLSDDDVVVSPMFESTAADLGSVVRKNLLSDCSVVSTSLEDKQQVPSEDSMEKVKVYLRVRPLLPSELERQEDQGCVRIENVETLVLQAPKDSFALKSNERGIGQATHRFTFSQIFGPEVGQASFFNLTVKEMVKDVLKGQNWLIYTYGVTNSGKTHTIQGTIKDGGILPRSLALIFNSLQGQLHPTPDLKPLLSNEVIWLDSKQIRQEEMKKLSLLNGGLQEEELSTSLKRSVYIESRIGTSTSFDSGIAGLSSISQCTSSSQLDETSHRWAQPDTAPLPVPANIRFSIWISFFEIYNELLYDLLEPPSQQRKRQTLRLCEDQNGNPYVKDLNWIHVQDAEEAWKLLKVGRKNQSFASTHLNQNSSRSHSIFSIRILHLQGEGDIVPKISELSLCDLAGSERCKDQKSGERLKEAGNINTSLHTLGRCIAALRQNQQNRSKQNLVPFRDSKLTRVFQGFFTGRGRSCMIVNVNPCASTYDETLHVAKFSAIASQLVHAPPMQLGFPSLHSFIKEHSLQVSPSLEKGAKADTGLDDDIENEADISMYGKEELLQVVEAMKTLLLKERQEKLQLEMHLRDEICNEMVEQMQQREQWCSEHLDTQKELLEEMYEEKLNILKESLTSFYQEEIQERDEKIEELEALLQEARQQSVAHQQSGSELALRRSQRLAASASTQQLQEVKAKLQQCKAELNSTTEELHKYQKMLEPPPSAKPFTIDVDKKLEEGQKNIRLLRTELQKLGESLQSAERACCHSTGAGKLRQALTTCDDILIKQDQTLAELQNNMVLVKLDLRKKAACIAEQYHTVLKLQGQVSAKKRLGTNQENQQPNQQPPGKKPFLRNLLPRTPTCQSSTDCSPYARILRSRRSPLLKSGPFGKKY</sequence>